<feature type="chain" id="PRO_1000060683" description="Large ribosomal subunit protein bL20">
    <location>
        <begin position="1"/>
        <end position="119"/>
    </location>
</feature>
<dbReference type="EMBL" id="CP000724">
    <property type="protein sequence ID" value="ABR47812.1"/>
    <property type="molecule type" value="Genomic_DNA"/>
</dbReference>
<dbReference type="RefSeq" id="WP_012062850.1">
    <property type="nucleotide sequence ID" value="NC_009633.1"/>
</dbReference>
<dbReference type="SMR" id="A6TNP4"/>
<dbReference type="STRING" id="293826.Amet_1635"/>
<dbReference type="KEGG" id="amt:Amet_1635"/>
<dbReference type="eggNOG" id="COG0292">
    <property type="taxonomic scope" value="Bacteria"/>
</dbReference>
<dbReference type="HOGENOM" id="CLU_123265_0_1_9"/>
<dbReference type="OrthoDB" id="9808966at2"/>
<dbReference type="Proteomes" id="UP000001572">
    <property type="component" value="Chromosome"/>
</dbReference>
<dbReference type="GO" id="GO:1990904">
    <property type="term" value="C:ribonucleoprotein complex"/>
    <property type="evidence" value="ECO:0007669"/>
    <property type="project" value="UniProtKB-KW"/>
</dbReference>
<dbReference type="GO" id="GO:0005840">
    <property type="term" value="C:ribosome"/>
    <property type="evidence" value="ECO:0007669"/>
    <property type="project" value="UniProtKB-KW"/>
</dbReference>
<dbReference type="GO" id="GO:0019843">
    <property type="term" value="F:rRNA binding"/>
    <property type="evidence" value="ECO:0007669"/>
    <property type="project" value="UniProtKB-UniRule"/>
</dbReference>
<dbReference type="GO" id="GO:0003735">
    <property type="term" value="F:structural constituent of ribosome"/>
    <property type="evidence" value="ECO:0007669"/>
    <property type="project" value="InterPro"/>
</dbReference>
<dbReference type="GO" id="GO:0000027">
    <property type="term" value="P:ribosomal large subunit assembly"/>
    <property type="evidence" value="ECO:0007669"/>
    <property type="project" value="UniProtKB-UniRule"/>
</dbReference>
<dbReference type="GO" id="GO:0006412">
    <property type="term" value="P:translation"/>
    <property type="evidence" value="ECO:0007669"/>
    <property type="project" value="InterPro"/>
</dbReference>
<dbReference type="CDD" id="cd07026">
    <property type="entry name" value="Ribosomal_L20"/>
    <property type="match status" value="1"/>
</dbReference>
<dbReference type="FunFam" id="1.10.1900.20:FF:000001">
    <property type="entry name" value="50S ribosomal protein L20"/>
    <property type="match status" value="1"/>
</dbReference>
<dbReference type="Gene3D" id="6.10.160.10">
    <property type="match status" value="1"/>
</dbReference>
<dbReference type="Gene3D" id="1.10.1900.20">
    <property type="entry name" value="Ribosomal protein L20"/>
    <property type="match status" value="1"/>
</dbReference>
<dbReference type="HAMAP" id="MF_00382">
    <property type="entry name" value="Ribosomal_bL20"/>
    <property type="match status" value="1"/>
</dbReference>
<dbReference type="InterPro" id="IPR005813">
    <property type="entry name" value="Ribosomal_bL20"/>
</dbReference>
<dbReference type="InterPro" id="IPR049946">
    <property type="entry name" value="RIBOSOMAL_L20_CS"/>
</dbReference>
<dbReference type="InterPro" id="IPR035566">
    <property type="entry name" value="Ribosomal_protein_bL20_C"/>
</dbReference>
<dbReference type="NCBIfam" id="TIGR01032">
    <property type="entry name" value="rplT_bact"/>
    <property type="match status" value="1"/>
</dbReference>
<dbReference type="PANTHER" id="PTHR10986">
    <property type="entry name" value="39S RIBOSOMAL PROTEIN L20"/>
    <property type="match status" value="1"/>
</dbReference>
<dbReference type="Pfam" id="PF00453">
    <property type="entry name" value="Ribosomal_L20"/>
    <property type="match status" value="1"/>
</dbReference>
<dbReference type="PRINTS" id="PR00062">
    <property type="entry name" value="RIBOSOMALL20"/>
</dbReference>
<dbReference type="SUPFAM" id="SSF74731">
    <property type="entry name" value="Ribosomal protein L20"/>
    <property type="match status" value="1"/>
</dbReference>
<dbReference type="PROSITE" id="PS00937">
    <property type="entry name" value="RIBOSOMAL_L20"/>
    <property type="match status" value="1"/>
</dbReference>
<organism>
    <name type="scientific">Alkaliphilus metalliredigens (strain QYMF)</name>
    <dbReference type="NCBI Taxonomy" id="293826"/>
    <lineage>
        <taxon>Bacteria</taxon>
        <taxon>Bacillati</taxon>
        <taxon>Bacillota</taxon>
        <taxon>Clostridia</taxon>
        <taxon>Peptostreptococcales</taxon>
        <taxon>Natronincolaceae</taxon>
        <taxon>Alkaliphilus</taxon>
    </lineage>
</organism>
<sequence>MARVKKGVTARKRHKKVLKLAKGFRGARSKLFRPANQFVMKALRHAYVGRKLRKRDFRRLWITRINAATRINGLSYSKFISGLKLSGIEMNRKVLSEMAIHDKEGFAQLVETAKQKLNA</sequence>
<evidence type="ECO:0000255" key="1">
    <source>
        <dbReference type="HAMAP-Rule" id="MF_00382"/>
    </source>
</evidence>
<evidence type="ECO:0000305" key="2"/>
<reference key="1">
    <citation type="journal article" date="2016" name="Genome Announc.">
        <title>Complete genome sequence of Alkaliphilus metalliredigens strain QYMF, an alkaliphilic and metal-reducing bacterium isolated from borax-contaminated leachate ponds.</title>
        <authorList>
            <person name="Hwang C."/>
            <person name="Copeland A."/>
            <person name="Lucas S."/>
            <person name="Lapidus A."/>
            <person name="Barry K."/>
            <person name="Detter J.C."/>
            <person name="Glavina Del Rio T."/>
            <person name="Hammon N."/>
            <person name="Israni S."/>
            <person name="Dalin E."/>
            <person name="Tice H."/>
            <person name="Pitluck S."/>
            <person name="Chertkov O."/>
            <person name="Brettin T."/>
            <person name="Bruce D."/>
            <person name="Han C."/>
            <person name="Schmutz J."/>
            <person name="Larimer F."/>
            <person name="Land M.L."/>
            <person name="Hauser L."/>
            <person name="Kyrpides N."/>
            <person name="Mikhailova N."/>
            <person name="Ye Q."/>
            <person name="Zhou J."/>
            <person name="Richardson P."/>
            <person name="Fields M.W."/>
        </authorList>
    </citation>
    <scope>NUCLEOTIDE SEQUENCE [LARGE SCALE GENOMIC DNA]</scope>
    <source>
        <strain>QYMF</strain>
    </source>
</reference>
<protein>
    <recommendedName>
        <fullName evidence="1">Large ribosomal subunit protein bL20</fullName>
    </recommendedName>
    <alternativeName>
        <fullName evidence="2">50S ribosomal protein L20</fullName>
    </alternativeName>
</protein>
<keyword id="KW-1185">Reference proteome</keyword>
<keyword id="KW-0687">Ribonucleoprotein</keyword>
<keyword id="KW-0689">Ribosomal protein</keyword>
<keyword id="KW-0694">RNA-binding</keyword>
<keyword id="KW-0699">rRNA-binding</keyword>
<accession>A6TNP4</accession>
<proteinExistence type="inferred from homology"/>
<comment type="function">
    <text evidence="1">Binds directly to 23S ribosomal RNA and is necessary for the in vitro assembly process of the 50S ribosomal subunit. It is not involved in the protein synthesizing functions of that subunit.</text>
</comment>
<comment type="similarity">
    <text evidence="1">Belongs to the bacterial ribosomal protein bL20 family.</text>
</comment>
<name>RL20_ALKMQ</name>
<gene>
    <name evidence="1" type="primary">rplT</name>
    <name type="ordered locus">Amet_1635</name>
</gene>